<accession>Q1BS30</accession>
<comment type="catalytic activity">
    <reaction evidence="1">
        <text>1-(5-phospho-beta-D-ribosyl)-5-[(5-phospho-beta-D-ribosylamino)methylideneamino]imidazole-4-carboxamide = 5-[(5-phospho-1-deoxy-D-ribulos-1-ylimino)methylamino]-1-(5-phospho-beta-D-ribosyl)imidazole-4-carboxamide</text>
        <dbReference type="Rhea" id="RHEA:15469"/>
        <dbReference type="ChEBI" id="CHEBI:58435"/>
        <dbReference type="ChEBI" id="CHEBI:58525"/>
        <dbReference type="EC" id="5.3.1.16"/>
    </reaction>
</comment>
<comment type="pathway">
    <text evidence="1">Amino-acid biosynthesis; L-histidine biosynthesis; L-histidine from 5-phospho-alpha-D-ribose 1-diphosphate: step 4/9.</text>
</comment>
<comment type="subcellular location">
    <subcellularLocation>
        <location evidence="1">Cytoplasm</location>
    </subcellularLocation>
</comment>
<comment type="similarity">
    <text evidence="1">Belongs to the HisA/HisF family.</text>
</comment>
<protein>
    <recommendedName>
        <fullName evidence="1">1-(5-phosphoribosyl)-5-[(5-phosphoribosylamino)methylideneamino] imidazole-4-carboxamide isomerase</fullName>
        <ecNumber evidence="1">5.3.1.16</ecNumber>
    </recommendedName>
    <alternativeName>
        <fullName evidence="1">Phosphoribosylformimino-5-aminoimidazole carboxamide ribotide isomerase</fullName>
    </alternativeName>
</protein>
<name>HIS4_BURO1</name>
<dbReference type="EC" id="5.3.1.16" evidence="1"/>
<dbReference type="EMBL" id="CP000378">
    <property type="protein sequence ID" value="ABF77575.1"/>
    <property type="molecule type" value="Genomic_DNA"/>
</dbReference>
<dbReference type="SMR" id="Q1BS30"/>
<dbReference type="HOGENOM" id="CLU_048577_1_1_4"/>
<dbReference type="UniPathway" id="UPA00031">
    <property type="reaction ID" value="UER00009"/>
</dbReference>
<dbReference type="GO" id="GO:0005737">
    <property type="term" value="C:cytoplasm"/>
    <property type="evidence" value="ECO:0007669"/>
    <property type="project" value="UniProtKB-SubCell"/>
</dbReference>
<dbReference type="GO" id="GO:0003949">
    <property type="term" value="F:1-(5-phosphoribosyl)-5-[(5-phosphoribosylamino)methylideneamino]imidazole-4-carboxamide isomerase activity"/>
    <property type="evidence" value="ECO:0007669"/>
    <property type="project" value="UniProtKB-UniRule"/>
</dbReference>
<dbReference type="GO" id="GO:0000105">
    <property type="term" value="P:L-histidine biosynthetic process"/>
    <property type="evidence" value="ECO:0007669"/>
    <property type="project" value="UniProtKB-UniRule"/>
</dbReference>
<dbReference type="GO" id="GO:0000162">
    <property type="term" value="P:L-tryptophan biosynthetic process"/>
    <property type="evidence" value="ECO:0007669"/>
    <property type="project" value="TreeGrafter"/>
</dbReference>
<dbReference type="CDD" id="cd04732">
    <property type="entry name" value="HisA"/>
    <property type="match status" value="1"/>
</dbReference>
<dbReference type="FunFam" id="3.20.20.70:FF:000009">
    <property type="entry name" value="1-(5-phosphoribosyl)-5-[(5-phosphoribosylamino)methylideneamino] imidazole-4-carboxamide isomerase"/>
    <property type="match status" value="1"/>
</dbReference>
<dbReference type="Gene3D" id="3.20.20.70">
    <property type="entry name" value="Aldolase class I"/>
    <property type="match status" value="1"/>
</dbReference>
<dbReference type="HAMAP" id="MF_01014">
    <property type="entry name" value="HisA"/>
    <property type="match status" value="1"/>
</dbReference>
<dbReference type="InterPro" id="IPR013785">
    <property type="entry name" value="Aldolase_TIM"/>
</dbReference>
<dbReference type="InterPro" id="IPR006062">
    <property type="entry name" value="His_biosynth"/>
</dbReference>
<dbReference type="InterPro" id="IPR006063">
    <property type="entry name" value="HisA_bact_arch"/>
</dbReference>
<dbReference type="InterPro" id="IPR044524">
    <property type="entry name" value="Isoase_HisA-like"/>
</dbReference>
<dbReference type="InterPro" id="IPR023016">
    <property type="entry name" value="Isoase_HisA-like_bact"/>
</dbReference>
<dbReference type="InterPro" id="IPR011060">
    <property type="entry name" value="RibuloseP-bd_barrel"/>
</dbReference>
<dbReference type="NCBIfam" id="TIGR00007">
    <property type="entry name" value="1-(5-phosphoribosyl)-5-[(5-phosphoribosylamino)methylideneamino]imidazole-4-carboxamide isomerase"/>
    <property type="match status" value="1"/>
</dbReference>
<dbReference type="NCBIfam" id="NF010112">
    <property type="entry name" value="PRK13585.1"/>
    <property type="match status" value="1"/>
</dbReference>
<dbReference type="PANTHER" id="PTHR43090">
    <property type="entry name" value="1-(5-PHOSPHORIBOSYL)-5-[(5-PHOSPHORIBOSYLAMINO)METHYLIDENEAMINO] IMIDAZOLE-4-CARBOXAMIDE ISOMERASE"/>
    <property type="match status" value="1"/>
</dbReference>
<dbReference type="PANTHER" id="PTHR43090:SF2">
    <property type="entry name" value="1-(5-PHOSPHORIBOSYL)-5-[(5-PHOSPHORIBOSYLAMINO)METHYLIDENEAMINO] IMIDAZOLE-4-CARBOXAMIDE ISOMERASE"/>
    <property type="match status" value="1"/>
</dbReference>
<dbReference type="Pfam" id="PF00977">
    <property type="entry name" value="His_biosynth"/>
    <property type="match status" value="1"/>
</dbReference>
<dbReference type="SUPFAM" id="SSF51366">
    <property type="entry name" value="Ribulose-phoshate binding barrel"/>
    <property type="match status" value="1"/>
</dbReference>
<feature type="chain" id="PRO_0000290455" description="1-(5-phosphoribosyl)-5-[(5-phosphoribosylamino)methylideneamino] imidazole-4-carboxamide isomerase">
    <location>
        <begin position="1"/>
        <end position="251"/>
    </location>
</feature>
<feature type="active site" description="Proton acceptor" evidence="1">
    <location>
        <position position="8"/>
    </location>
</feature>
<feature type="active site" description="Proton donor" evidence="1">
    <location>
        <position position="131"/>
    </location>
</feature>
<organism>
    <name type="scientific">Burkholderia orbicola (strain AU 1054)</name>
    <dbReference type="NCBI Taxonomy" id="331271"/>
    <lineage>
        <taxon>Bacteria</taxon>
        <taxon>Pseudomonadati</taxon>
        <taxon>Pseudomonadota</taxon>
        <taxon>Betaproteobacteria</taxon>
        <taxon>Burkholderiales</taxon>
        <taxon>Burkholderiaceae</taxon>
        <taxon>Burkholderia</taxon>
        <taxon>Burkholderia cepacia complex</taxon>
        <taxon>Burkholderia orbicola</taxon>
    </lineage>
</organism>
<evidence type="ECO:0000255" key="1">
    <source>
        <dbReference type="HAMAP-Rule" id="MF_01014"/>
    </source>
</evidence>
<gene>
    <name evidence="1" type="primary">hisA</name>
    <name type="ordered locus">Bcen_2677</name>
</gene>
<sequence length="251" mass="26574">MLLIPAIDLKDGQCVRLKQGDMDQATIFSEDPAAMARKWVDLGARRLHLVDLNGAFAGKPKNLEAIEAILDEVGDEIPVQLGGGIRSLETIEKYLDAGLSYVIIGTAAVKNPGFLQDACTAFSGSIIVGLDAKDGKVATDGWSKLTGHEVIDLAKKFEDYGVESIVYTDIGRDGMLQGINIDATVKLAQAVGIPVIASGGLSNLTDIESLCEVEEHGVEGVICGRAIYSGDLDFAAAQKRADELNGELDNA</sequence>
<reference key="1">
    <citation type="submission" date="2006-05" db="EMBL/GenBank/DDBJ databases">
        <title>Complete sequence of chromosome 1 of Burkholderia cenocepacia AU 1054.</title>
        <authorList>
            <consortium name="US DOE Joint Genome Institute"/>
            <person name="Copeland A."/>
            <person name="Lucas S."/>
            <person name="Lapidus A."/>
            <person name="Barry K."/>
            <person name="Detter J.C."/>
            <person name="Glavina del Rio T."/>
            <person name="Hammon N."/>
            <person name="Israni S."/>
            <person name="Dalin E."/>
            <person name="Tice H."/>
            <person name="Pitluck S."/>
            <person name="Chain P."/>
            <person name="Malfatti S."/>
            <person name="Shin M."/>
            <person name="Vergez L."/>
            <person name="Schmutz J."/>
            <person name="Larimer F."/>
            <person name="Land M."/>
            <person name="Hauser L."/>
            <person name="Kyrpides N."/>
            <person name="Lykidis A."/>
            <person name="LiPuma J.J."/>
            <person name="Konstantinidis K."/>
            <person name="Tiedje J.M."/>
            <person name="Richardson P."/>
        </authorList>
    </citation>
    <scope>NUCLEOTIDE SEQUENCE [LARGE SCALE GENOMIC DNA]</scope>
    <source>
        <strain>AU 1054</strain>
    </source>
</reference>
<keyword id="KW-0028">Amino-acid biosynthesis</keyword>
<keyword id="KW-0963">Cytoplasm</keyword>
<keyword id="KW-0368">Histidine biosynthesis</keyword>
<keyword id="KW-0413">Isomerase</keyword>
<proteinExistence type="inferred from homology"/>